<accession>P76507</accession>
<accession>Q2MAL2</accession>
<evidence type="ECO:0000255" key="1"/>
<evidence type="ECO:0000305" key="2"/>
<comment type="subcellular location">
    <subcellularLocation>
        <location evidence="2">Cell membrane</location>
        <topology evidence="2">Multi-pass membrane protein</topology>
    </subcellularLocation>
</comment>
<name>YFDI_ECOLI</name>
<protein>
    <recommendedName>
        <fullName>Uncharacterized protein YfdI</fullName>
    </recommendedName>
</protein>
<keyword id="KW-1003">Cell membrane</keyword>
<keyword id="KW-0472">Membrane</keyword>
<keyword id="KW-1185">Reference proteome</keyword>
<keyword id="KW-0812">Transmembrane</keyword>
<keyword id="KW-1133">Transmembrane helix</keyword>
<proteinExistence type="predicted"/>
<sequence length="443" mass="51484">MNKAIKVSLYISFVLIICALSKNIMMLNTSDFGRAIKPLIEDIPAFTYDLPLLYKLKGHIDSIDSYEYISSYSYILYTYVLFISIFTEYLDARVLSLFLKVIYIYSLYAIFTSYIKTERYVTLFTFFILAFLMCSSSTLSMFASFYQEQIVIIFLPFLVYSLTCKNNKSMLLLFFSLLIISTAKNQFILTPLIVYSYYIFFDRHKLIIKSVICVVCLLASIFAISYSKGVVELNKYHATYFGSYLYMKNNGYKMPSYVDDKCVGLDAWGNKFDISFGATPTEVGTECFESHKDETFSNALFLLVSKPSTIFKLPFDDGVMSQYKENYFHVYKKLHVIYGESNILTTITNIKDNIFKNIRFISLLLFFIASIFIRNNKIKASLFVVSLFGISQFYVSFFGEGYRDLSKHLFGMYFSFDLCLYITVVFLIYKIIQRNQDNSDVKH</sequence>
<gene>
    <name type="primary">yfdI</name>
    <name type="ordered locus">b2352</name>
    <name type="ordered locus">JW5382</name>
</gene>
<organism>
    <name type="scientific">Escherichia coli (strain K12)</name>
    <dbReference type="NCBI Taxonomy" id="83333"/>
    <lineage>
        <taxon>Bacteria</taxon>
        <taxon>Pseudomonadati</taxon>
        <taxon>Pseudomonadota</taxon>
        <taxon>Gammaproteobacteria</taxon>
        <taxon>Enterobacterales</taxon>
        <taxon>Enterobacteriaceae</taxon>
        <taxon>Escherichia</taxon>
    </lineage>
</organism>
<dbReference type="EMBL" id="U00096">
    <property type="protein sequence ID" value="AAC75411.1"/>
    <property type="molecule type" value="Genomic_DNA"/>
</dbReference>
<dbReference type="EMBL" id="AP009048">
    <property type="protein sequence ID" value="BAE76694.1"/>
    <property type="molecule type" value="Genomic_DNA"/>
</dbReference>
<dbReference type="PIR" id="E65008">
    <property type="entry name" value="E65008"/>
</dbReference>
<dbReference type="RefSeq" id="NP_416853.1">
    <property type="nucleotide sequence ID" value="NC_000913.3"/>
</dbReference>
<dbReference type="RefSeq" id="WP_001030215.1">
    <property type="nucleotide sequence ID" value="NZ_LN832404.1"/>
</dbReference>
<dbReference type="BioGRID" id="4260543">
    <property type="interactions" value="220"/>
</dbReference>
<dbReference type="FunCoup" id="P76507">
    <property type="interactions" value="51"/>
</dbReference>
<dbReference type="STRING" id="511145.b2352"/>
<dbReference type="jPOST" id="P76507"/>
<dbReference type="PaxDb" id="511145-b2352"/>
<dbReference type="EnsemblBacteria" id="AAC75411">
    <property type="protein sequence ID" value="AAC75411"/>
    <property type="gene ID" value="b2352"/>
</dbReference>
<dbReference type="GeneID" id="946822"/>
<dbReference type="KEGG" id="ecj:JW5382"/>
<dbReference type="KEGG" id="eco:b2352"/>
<dbReference type="KEGG" id="ecoc:C3026_13085"/>
<dbReference type="PATRIC" id="fig|1411691.4.peg.4379"/>
<dbReference type="EchoBASE" id="EB3885"/>
<dbReference type="eggNOG" id="ENOG5033U8P">
    <property type="taxonomic scope" value="Bacteria"/>
</dbReference>
<dbReference type="HOGENOM" id="CLU_626631_0_0_6"/>
<dbReference type="InParanoid" id="P76507"/>
<dbReference type="OMA" id="TQYNSVF"/>
<dbReference type="OrthoDB" id="6636252at2"/>
<dbReference type="BioCyc" id="EcoCyc:G7221-MONOMER"/>
<dbReference type="BioCyc" id="MetaCyc:G7221-MONOMER"/>
<dbReference type="PRO" id="PR:P76507"/>
<dbReference type="Proteomes" id="UP000000625">
    <property type="component" value="Chromosome"/>
</dbReference>
<dbReference type="GO" id="GO:0005886">
    <property type="term" value="C:plasma membrane"/>
    <property type="evidence" value="ECO:0007669"/>
    <property type="project" value="UniProtKB-SubCell"/>
</dbReference>
<feature type="chain" id="PRO_0000169202" description="Uncharacterized protein YfdI">
    <location>
        <begin position="1"/>
        <end position="443"/>
    </location>
</feature>
<feature type="transmembrane region" description="Helical" evidence="1">
    <location>
        <begin position="7"/>
        <end position="29"/>
    </location>
</feature>
<feature type="transmembrane region" description="Helical" evidence="1">
    <location>
        <begin position="68"/>
        <end position="87"/>
    </location>
</feature>
<feature type="transmembrane region" description="Helical" evidence="1">
    <location>
        <begin position="94"/>
        <end position="111"/>
    </location>
</feature>
<feature type="transmembrane region" description="Helical" evidence="1">
    <location>
        <begin position="121"/>
        <end position="143"/>
    </location>
</feature>
<feature type="transmembrane region" description="Helical" evidence="1">
    <location>
        <begin position="150"/>
        <end position="164"/>
    </location>
</feature>
<feature type="transmembrane region" description="Helical" evidence="1">
    <location>
        <begin position="179"/>
        <end position="201"/>
    </location>
</feature>
<feature type="transmembrane region" description="Helical" evidence="1">
    <location>
        <begin position="206"/>
        <end position="225"/>
    </location>
</feature>
<feature type="transmembrane region" description="Helical" evidence="1">
    <location>
        <begin position="358"/>
        <end position="375"/>
    </location>
</feature>
<feature type="transmembrane region" description="Helical" evidence="1">
    <location>
        <begin position="382"/>
        <end position="399"/>
    </location>
</feature>
<feature type="transmembrane region" description="Helical" evidence="1">
    <location>
        <begin position="409"/>
        <end position="431"/>
    </location>
</feature>
<reference key="1">
    <citation type="journal article" date="1997" name="Science">
        <title>The complete genome sequence of Escherichia coli K-12.</title>
        <authorList>
            <person name="Blattner F.R."/>
            <person name="Plunkett G. III"/>
            <person name="Bloch C.A."/>
            <person name="Perna N.T."/>
            <person name="Burland V."/>
            <person name="Riley M."/>
            <person name="Collado-Vides J."/>
            <person name="Glasner J.D."/>
            <person name="Rode C.K."/>
            <person name="Mayhew G.F."/>
            <person name="Gregor J."/>
            <person name="Davis N.W."/>
            <person name="Kirkpatrick H.A."/>
            <person name="Goeden M.A."/>
            <person name="Rose D.J."/>
            <person name="Mau B."/>
            <person name="Shao Y."/>
        </authorList>
    </citation>
    <scope>NUCLEOTIDE SEQUENCE [LARGE SCALE GENOMIC DNA]</scope>
    <source>
        <strain>K12 / MG1655 / ATCC 47076</strain>
    </source>
</reference>
<reference key="2">
    <citation type="journal article" date="2006" name="Mol. Syst. Biol.">
        <title>Highly accurate genome sequences of Escherichia coli K-12 strains MG1655 and W3110.</title>
        <authorList>
            <person name="Hayashi K."/>
            <person name="Morooka N."/>
            <person name="Yamamoto Y."/>
            <person name="Fujita K."/>
            <person name="Isono K."/>
            <person name="Choi S."/>
            <person name="Ohtsubo E."/>
            <person name="Baba T."/>
            <person name="Wanner B.L."/>
            <person name="Mori H."/>
            <person name="Horiuchi T."/>
        </authorList>
    </citation>
    <scope>NUCLEOTIDE SEQUENCE [LARGE SCALE GENOMIC DNA]</scope>
    <source>
        <strain>K12 / W3110 / ATCC 27325 / DSM 5911</strain>
    </source>
</reference>